<comment type="similarity">
    <text evidence="1">Belongs to the eukaryotic ribosomal protein eL30 family.</text>
</comment>
<sequence length="108" mass="12095">MIKVSEQQVSFEGELKSLLKTGKVIFGAKRAIKYIKLSKVKMVIVASTLRGDLKQDIMHYAKLSNIPVYEYKGSGWDLGTLCGKPFMISTISIIDEGDSKILDIIKER</sequence>
<keyword id="KW-1185">Reference proteome</keyword>
<keyword id="KW-0687">Ribonucleoprotein</keyword>
<keyword id="KW-0689">Ribosomal protein</keyword>
<proteinExistence type="inferred from homology"/>
<organism>
    <name type="scientific">Saccharolobus solfataricus (strain ATCC 35092 / DSM 1617 / JCM 11322 / P2)</name>
    <name type="common">Sulfolobus solfataricus</name>
    <dbReference type="NCBI Taxonomy" id="273057"/>
    <lineage>
        <taxon>Archaea</taxon>
        <taxon>Thermoproteota</taxon>
        <taxon>Thermoprotei</taxon>
        <taxon>Sulfolobales</taxon>
        <taxon>Sulfolobaceae</taxon>
        <taxon>Saccharolobus</taxon>
    </lineage>
</organism>
<name>RL30E_SACS2</name>
<protein>
    <recommendedName>
        <fullName evidence="1">Large ribosomal subunit protein eL30</fullName>
    </recommendedName>
    <alternativeName>
        <fullName>50S ribosomal protein L30e</fullName>
    </alternativeName>
</protein>
<evidence type="ECO:0000305" key="1"/>
<gene>
    <name type="primary">rpl30e</name>
    <name type="ordered locus">SSO0221</name>
</gene>
<accession>Q980R3</accession>
<reference key="1">
    <citation type="journal article" date="2001" name="Proc. Natl. Acad. Sci. U.S.A.">
        <title>The complete genome of the crenarchaeon Sulfolobus solfataricus P2.</title>
        <authorList>
            <person name="She Q."/>
            <person name="Singh R.K."/>
            <person name="Confalonieri F."/>
            <person name="Zivanovic Y."/>
            <person name="Allard G."/>
            <person name="Awayez M.J."/>
            <person name="Chan-Weiher C.C.-Y."/>
            <person name="Clausen I.G."/>
            <person name="Curtis B.A."/>
            <person name="De Moors A."/>
            <person name="Erauso G."/>
            <person name="Fletcher C."/>
            <person name="Gordon P.M.K."/>
            <person name="Heikamp-de Jong I."/>
            <person name="Jeffries A.C."/>
            <person name="Kozera C.J."/>
            <person name="Medina N."/>
            <person name="Peng X."/>
            <person name="Thi-Ngoc H.P."/>
            <person name="Redder P."/>
            <person name="Schenk M.E."/>
            <person name="Theriault C."/>
            <person name="Tolstrup N."/>
            <person name="Charlebois R.L."/>
            <person name="Doolittle W.F."/>
            <person name="Duguet M."/>
            <person name="Gaasterland T."/>
            <person name="Garrett R.A."/>
            <person name="Ragan M.A."/>
            <person name="Sensen C.W."/>
            <person name="Van der Oost J."/>
        </authorList>
    </citation>
    <scope>NUCLEOTIDE SEQUENCE [LARGE SCALE GENOMIC DNA]</scope>
    <source>
        <strain>ATCC 35092 / DSM 1617 / JCM 11322 / P2</strain>
    </source>
</reference>
<feature type="chain" id="PRO_0000146159" description="Large ribosomal subunit protein eL30">
    <location>
        <begin position="1"/>
        <end position="108"/>
    </location>
</feature>
<dbReference type="EMBL" id="AE006641">
    <property type="protein sequence ID" value="AAK40564.1"/>
    <property type="molecule type" value="Genomic_DNA"/>
</dbReference>
<dbReference type="PIR" id="E90163">
    <property type="entry name" value="E90163"/>
</dbReference>
<dbReference type="SMR" id="Q980R3"/>
<dbReference type="FunCoup" id="Q980R3">
    <property type="interactions" value="199"/>
</dbReference>
<dbReference type="STRING" id="273057.SSO0221"/>
<dbReference type="PaxDb" id="273057-SSO0221"/>
<dbReference type="EnsemblBacteria" id="AAK40564">
    <property type="protein sequence ID" value="AAK40564"/>
    <property type="gene ID" value="SSO0221"/>
</dbReference>
<dbReference type="KEGG" id="sso:SSO0221"/>
<dbReference type="PATRIC" id="fig|273057.12.peg.219"/>
<dbReference type="eggNOG" id="arCOG01752">
    <property type="taxonomic scope" value="Archaea"/>
</dbReference>
<dbReference type="HOGENOM" id="CLU_130502_1_0_2"/>
<dbReference type="InParanoid" id="Q980R3"/>
<dbReference type="PhylomeDB" id="Q980R3"/>
<dbReference type="Proteomes" id="UP000001974">
    <property type="component" value="Chromosome"/>
</dbReference>
<dbReference type="GO" id="GO:0022625">
    <property type="term" value="C:cytosolic large ribosomal subunit"/>
    <property type="evidence" value="ECO:0000318"/>
    <property type="project" value="GO_Central"/>
</dbReference>
<dbReference type="GO" id="GO:0003723">
    <property type="term" value="F:RNA binding"/>
    <property type="evidence" value="ECO:0000318"/>
    <property type="project" value="GO_Central"/>
</dbReference>
<dbReference type="GO" id="GO:0003735">
    <property type="term" value="F:structural constituent of ribosome"/>
    <property type="evidence" value="ECO:0000318"/>
    <property type="project" value="GO_Central"/>
</dbReference>
<dbReference type="GO" id="GO:0006412">
    <property type="term" value="P:translation"/>
    <property type="evidence" value="ECO:0007669"/>
    <property type="project" value="UniProtKB-UniRule"/>
</dbReference>
<dbReference type="Gene3D" id="3.30.1330.30">
    <property type="match status" value="1"/>
</dbReference>
<dbReference type="HAMAP" id="MF_00481">
    <property type="entry name" value="Ribosomal_eL30"/>
    <property type="match status" value="1"/>
</dbReference>
<dbReference type="InterPro" id="IPR000231">
    <property type="entry name" value="Ribosomal_eL30"/>
</dbReference>
<dbReference type="InterPro" id="IPR039109">
    <property type="entry name" value="Ribosomal_eL30-like"/>
</dbReference>
<dbReference type="InterPro" id="IPR029064">
    <property type="entry name" value="Ribosomal_eL30-like_sf"/>
</dbReference>
<dbReference type="InterPro" id="IPR022991">
    <property type="entry name" value="Ribosomal_eL30_CS"/>
</dbReference>
<dbReference type="InterPro" id="IPR004038">
    <property type="entry name" value="Ribosomal_eL8/eL30/eS12/Gad45"/>
</dbReference>
<dbReference type="NCBIfam" id="NF002172">
    <property type="entry name" value="PRK01018.1"/>
    <property type="match status" value="1"/>
</dbReference>
<dbReference type="PANTHER" id="PTHR11449">
    <property type="entry name" value="RIBOSOMAL PROTEIN L30"/>
    <property type="match status" value="1"/>
</dbReference>
<dbReference type="Pfam" id="PF01248">
    <property type="entry name" value="Ribosomal_L7Ae"/>
    <property type="match status" value="1"/>
</dbReference>
<dbReference type="SUPFAM" id="SSF55315">
    <property type="entry name" value="L30e-like"/>
    <property type="match status" value="1"/>
</dbReference>
<dbReference type="PROSITE" id="PS00709">
    <property type="entry name" value="RIBOSOMAL_L30E_1"/>
    <property type="match status" value="1"/>
</dbReference>
<dbReference type="PROSITE" id="PS00993">
    <property type="entry name" value="RIBOSOMAL_L30E_2"/>
    <property type="match status" value="1"/>
</dbReference>